<sequence>MRHDNDSWDITTSVGSTALFVAASRALEARKPDPLAVDPYAEVFCRAAGGDWAGLFDAGADPKPDHVLFSEFGEQFVNFQGARTRYFDAYFAAASDAGVRQVVLLAAGLDSRAYRLPWPDGTVVYELDQPRVLEFKREVLAERGEQPVAQRREVAVDLRDDWCAALTAAGFDPARPSAWLAEGLLMYLPATAQEALFSGIDALSAPRSWAAVEESVPMPAEVFAYKREEERAAGEEGTFFTLVYNERHAPAERWFGERGWAAEPTSLADYLTRVGRPAPVDDPEFGAMISAIRLVTATKG</sequence>
<comment type="function">
    <text evidence="1">Exhibits S-adenosyl-L-methionine-dependent methyltransferase activity.</text>
</comment>
<comment type="similarity">
    <text evidence="2">Belongs to the UPF0677 family.</text>
</comment>
<name>Y369_MYCSS</name>
<reference key="1">
    <citation type="submission" date="2006-06" db="EMBL/GenBank/DDBJ databases">
        <title>Complete sequence of chromosome of Mycobacterium sp. MCS.</title>
        <authorList>
            <consortium name="US DOE Joint Genome Institute"/>
            <person name="Copeland A."/>
            <person name="Lucas S."/>
            <person name="Lapidus A."/>
            <person name="Barry K."/>
            <person name="Detter J.C."/>
            <person name="Glavina del Rio T."/>
            <person name="Hammon N."/>
            <person name="Israni S."/>
            <person name="Dalin E."/>
            <person name="Tice H."/>
            <person name="Pitluck S."/>
            <person name="Martinez M."/>
            <person name="Schmutz J."/>
            <person name="Larimer F."/>
            <person name="Land M."/>
            <person name="Hauser L."/>
            <person name="Kyrpides N."/>
            <person name="Kim E."/>
            <person name="Miller C.D."/>
            <person name="Hughes J.E."/>
            <person name="Anderson A.J."/>
            <person name="Sims R.C."/>
            <person name="Richardson P."/>
        </authorList>
    </citation>
    <scope>NUCLEOTIDE SEQUENCE [LARGE SCALE GENOMIC DNA]</scope>
    <source>
        <strain>MCS</strain>
    </source>
</reference>
<evidence type="ECO:0000250" key="1"/>
<evidence type="ECO:0000305" key="2"/>
<accession>Q1BF44</accession>
<keyword id="KW-0489">Methyltransferase</keyword>
<keyword id="KW-0949">S-adenosyl-L-methionine</keyword>
<keyword id="KW-0808">Transferase</keyword>
<proteinExistence type="inferred from homology"/>
<feature type="chain" id="PRO_0000361220" description="Putative S-adenosyl-L-methionine-dependent methyltransferase Mmcs_0369">
    <location>
        <begin position="1"/>
        <end position="300"/>
    </location>
</feature>
<feature type="binding site" evidence="1">
    <location>
        <position position="128"/>
    </location>
    <ligand>
        <name>S-adenosyl-L-methionine</name>
        <dbReference type="ChEBI" id="CHEBI:59789"/>
    </ligand>
</feature>
<feature type="binding site" evidence="1">
    <location>
        <begin position="157"/>
        <end position="158"/>
    </location>
    <ligand>
        <name>S-adenosyl-L-methionine</name>
        <dbReference type="ChEBI" id="CHEBI:59789"/>
    </ligand>
</feature>
<gene>
    <name type="ordered locus">Mmcs_0369</name>
</gene>
<protein>
    <recommendedName>
        <fullName>Putative S-adenosyl-L-methionine-dependent methyltransferase Mmcs_0369</fullName>
        <ecNumber>2.1.1.-</ecNumber>
    </recommendedName>
</protein>
<dbReference type="EC" id="2.1.1.-"/>
<dbReference type="EMBL" id="CP000384">
    <property type="protein sequence ID" value="ABG06490.1"/>
    <property type="molecule type" value="Genomic_DNA"/>
</dbReference>
<dbReference type="SMR" id="Q1BF44"/>
<dbReference type="KEGG" id="mmc:Mmcs_0369"/>
<dbReference type="HOGENOM" id="CLU_056160_2_1_11"/>
<dbReference type="BioCyc" id="MSP164756:G1G6O-377-MONOMER"/>
<dbReference type="GO" id="GO:0008168">
    <property type="term" value="F:methyltransferase activity"/>
    <property type="evidence" value="ECO:0007669"/>
    <property type="project" value="UniProtKB-KW"/>
</dbReference>
<dbReference type="GO" id="GO:0032259">
    <property type="term" value="P:methylation"/>
    <property type="evidence" value="ECO:0007669"/>
    <property type="project" value="UniProtKB-KW"/>
</dbReference>
<dbReference type="FunFam" id="3.40.50.150:FF:000152">
    <property type="entry name" value="S-adenosyl-L-methionine-dependent methyltransferase"/>
    <property type="match status" value="1"/>
</dbReference>
<dbReference type="Gene3D" id="3.40.50.150">
    <property type="entry name" value="Vaccinia Virus protein VP39"/>
    <property type="match status" value="1"/>
</dbReference>
<dbReference type="InterPro" id="IPR007213">
    <property type="entry name" value="Ppm1/Ppm2/Tcmp"/>
</dbReference>
<dbReference type="InterPro" id="IPR029063">
    <property type="entry name" value="SAM-dependent_MTases_sf"/>
</dbReference>
<dbReference type="InterPro" id="IPR011610">
    <property type="entry name" value="SAM_mthyl_Trfase_ML2640-like"/>
</dbReference>
<dbReference type="NCBIfam" id="TIGR00027">
    <property type="entry name" value="mthyl_TIGR00027"/>
    <property type="match status" value="1"/>
</dbReference>
<dbReference type="PANTHER" id="PTHR43619">
    <property type="entry name" value="S-ADENOSYL-L-METHIONINE-DEPENDENT METHYLTRANSFERASE YKTD-RELATED"/>
    <property type="match status" value="1"/>
</dbReference>
<dbReference type="PANTHER" id="PTHR43619:SF2">
    <property type="entry name" value="S-ADENOSYL-L-METHIONINE-DEPENDENT METHYLTRANSFERASES SUPERFAMILY PROTEIN"/>
    <property type="match status" value="1"/>
</dbReference>
<dbReference type="Pfam" id="PF04072">
    <property type="entry name" value="LCM"/>
    <property type="match status" value="1"/>
</dbReference>
<dbReference type="SUPFAM" id="SSF53335">
    <property type="entry name" value="S-adenosyl-L-methionine-dependent methyltransferases"/>
    <property type="match status" value="1"/>
</dbReference>
<organism>
    <name type="scientific">Mycobacterium sp. (strain MCS)</name>
    <dbReference type="NCBI Taxonomy" id="164756"/>
    <lineage>
        <taxon>Bacteria</taxon>
        <taxon>Bacillati</taxon>
        <taxon>Actinomycetota</taxon>
        <taxon>Actinomycetes</taxon>
        <taxon>Mycobacteriales</taxon>
        <taxon>Mycobacteriaceae</taxon>
        <taxon>Mycobacterium</taxon>
    </lineage>
</organism>